<comment type="function">
    <text evidence="1 7 16 24 25">Coreceptor for IL1RL2 in the IL-36 signaling system (By similarity). Coreceptor with IL1R1 in the IL-1 signaling system. Associates with IL1R1 bound to IL1B to form the high affinity interleukin-1 receptor complex which mediates interleukin-1-dependent activation of NF-kappa-B and other pathways. Signaling involves the recruitment of adapter molecules such as TOLLIP, MYD88, and IRAK1 or IRAK2 via the respective TIR domains of the receptor/coreceptor subunits. Recruits TOLLIP to the signaling complex. Does not bind to interleukin-1 alone; binding of IL1RN to IL1R1, prevents its association with IL1R1 to form a signaling complex. The cellular response is modulated through a non-signaling association with the membrane IL1R2 decoy receptor. Coreceptor for IL1RL1 in the IL-33 signaling system. Can bidirectionally induce pre- and postsynaptic differentiation of neurons by trans-synaptically binding to PTPRD (By similarity). May play a role in IL1B-mediated costimulation of IFNG production from T-helper 1 (Th1) cells (Probable).</text>
</comment>
<comment type="function">
    <molecule>Isoform 2</molecule>
    <text evidence="1 8">Associates with secreted ligand-bound IL1R2 and increases the affinity of secreted IL1R2 for IL1B; this complex formation may be the dominant mechanism for neutralization of IL1B by secreted/soluble receptors (PubMed:12530978). Enhances the ability of secreted IL1R1 to inhibit IL-33 signaling (By similarity).</text>
</comment>
<comment type="function">
    <molecule>Isoform 4</molecule>
    <text evidence="1 10">Unable to mediate canonical IL-1 signaling (PubMed:19481478). Required for Src phosphorylation by IL1B. May be involved in IL1B-potentiated NMDA-induced calcium influx in neurons (By similarity).</text>
</comment>
<comment type="catalytic activity">
    <reaction evidence="4">
        <text>NAD(+) + H2O = ADP-D-ribose + nicotinamide + H(+)</text>
        <dbReference type="Rhea" id="RHEA:16301"/>
        <dbReference type="ChEBI" id="CHEBI:15377"/>
        <dbReference type="ChEBI" id="CHEBI:15378"/>
        <dbReference type="ChEBI" id="CHEBI:17154"/>
        <dbReference type="ChEBI" id="CHEBI:57540"/>
        <dbReference type="ChEBI" id="CHEBI:57967"/>
        <dbReference type="EC" id="3.2.2.6"/>
    </reaction>
    <physiologicalReaction direction="left-to-right" evidence="4">
        <dbReference type="Rhea" id="RHEA:16302"/>
    </physiologicalReaction>
</comment>
<comment type="subunit">
    <text evidence="1 10 11 16 17 25">The interleukin-36 receptor complex is a heterodimer of IL1RL2 and IL1RAP; the association is inhibited by IL36RN (By similarity). The interleukin-1 receptor complex is a heterodimer of IL1R1 and IL1RAP. Associates with IL1R2 to form a non-signaling interleukin-1 receptor complex. Isoform 4 interacts with IL1R1 in an interleukin-1-dependent manner. Interacts with IL-33-bound IL1RL1 to form the minimal interleukin-33 signaling complex with a 1:1:1 stoichiometry. Interacts with KIT (independently of stimulation with KITLG/SCF). A mast cell-specific KITLG/SCF-induced interleukin-33 signaling complex contains IL1RL1, IL1RAP, KIT and MYD88 (By similarity). Interacts (via the first immunoglobilin domain) with PTPRD (via the third immunoglobilin domain); induces pre- and postsynaptic differentiation of neurons (By similarity).</text>
</comment>
<comment type="subcellular location">
    <molecule>Isoform 1</molecule>
    <subcellularLocation>
        <location>Cell membrane</location>
        <topology>Single-pass type I membrane protein</topology>
    </subcellularLocation>
</comment>
<comment type="subcellular location">
    <molecule>Isoform 2</molecule>
    <subcellularLocation>
        <location>Secreted</location>
    </subcellularLocation>
</comment>
<comment type="subcellular location">
    <molecule>Isoform 3</molecule>
    <subcellularLocation>
        <location>Secreted</location>
    </subcellularLocation>
</comment>
<comment type="alternative products">
    <event type="alternative splicing"/>
    <isoform>
        <id>Q9NPH3-1</id>
        <name>1</name>
        <name>Membrane-bound IL-1RAcP</name>
        <name>mIL-1RAcP</name>
        <sequence type="displayed"/>
    </isoform>
    <isoform>
        <id>Q9NPH3-2</id>
        <name>2</name>
        <name>Soluble IL-1RAcP</name>
        <name>sIL-1RAcP</name>
        <sequence type="described" ref="VSP_008050 VSP_008051"/>
    </isoform>
    <isoform>
        <id>Q9NPH3-3</id>
        <name>3</name>
        <name>Soluble IL-1RAcP-beta</name>
        <name>sIL-1RAcP-beta</name>
        <sequence type="described" ref="VSP_008052"/>
    </isoform>
    <isoform>
        <id>Q9NPH3-5</id>
        <name>4</name>
        <name>AcPb</name>
        <name>mIL-1RAcP687</name>
        <sequence type="described" ref="VSP_041256"/>
    </isoform>
</comment>
<comment type="tissue specificity">
    <text evidence="6 8 10 12 13 14 15">Detected in liver, skin, placenta, thymus and lung. Isoform 4 is predominantly expressed in brain. Overexpressed on candidate chronic myeloid leukemia (CML) stem cells, hematopoietic stem cells and mononuclear cells of patients with acute myeloid leukemia (AML). Overexpressed in patients with chronic obstructive pulmonary disease (COPD). Expressed in T-helper 1 (Th1) and T-helper 2 (Th2) cell subsets (PubMed:10653850).</text>
</comment>
<comment type="induction">
    <text evidence="7 9">Isoform 1 is down-regulated by phorbol ester treatment. Isoform 2 is induced by phorbol ester treatment.</text>
</comment>
<comment type="domain">
    <text evidence="4">The TIR domain mediates NAD(+) hydrolase (NADase) activity. Self-association of TIR domains is required for NADase activity.</text>
</comment>
<comment type="miscellaneous">
    <molecule>Isoform 3</molecule>
    <text evidence="23">May be produced at very low levels due to a premature stop codon in the mRNA, leading to nonsense-mediated mRNA decay.</text>
</comment>
<comment type="similarity">
    <text evidence="23">Belongs to the interleukin-1 receptor family.</text>
</comment>
<organism>
    <name type="scientific">Homo sapiens</name>
    <name type="common">Human</name>
    <dbReference type="NCBI Taxonomy" id="9606"/>
    <lineage>
        <taxon>Eukaryota</taxon>
        <taxon>Metazoa</taxon>
        <taxon>Chordata</taxon>
        <taxon>Craniata</taxon>
        <taxon>Vertebrata</taxon>
        <taxon>Euteleostomi</taxon>
        <taxon>Mammalia</taxon>
        <taxon>Eutheria</taxon>
        <taxon>Euarchontoglires</taxon>
        <taxon>Primates</taxon>
        <taxon>Haplorrhini</taxon>
        <taxon>Catarrhini</taxon>
        <taxon>Hominidae</taxon>
        <taxon>Homo</taxon>
    </lineage>
</organism>
<keyword id="KW-0002">3D-structure</keyword>
<keyword id="KW-0025">Alternative splicing</keyword>
<keyword id="KW-1003">Cell membrane</keyword>
<keyword id="KW-1015">Disulfide bond</keyword>
<keyword id="KW-0325">Glycoprotein</keyword>
<keyword id="KW-0378">Hydrolase</keyword>
<keyword id="KW-0391">Immunity</keyword>
<keyword id="KW-0393">Immunoglobulin domain</keyword>
<keyword id="KW-0395">Inflammatory response</keyword>
<keyword id="KW-0399">Innate immunity</keyword>
<keyword id="KW-0472">Membrane</keyword>
<keyword id="KW-0520">NAD</keyword>
<keyword id="KW-0597">Phosphoprotein</keyword>
<keyword id="KW-1267">Proteomics identification</keyword>
<keyword id="KW-0675">Receptor</keyword>
<keyword id="KW-1185">Reference proteome</keyword>
<keyword id="KW-0677">Repeat</keyword>
<keyword id="KW-0964">Secreted</keyword>
<keyword id="KW-0732">Signal</keyword>
<keyword id="KW-0812">Transmembrane</keyword>
<keyword id="KW-1133">Transmembrane helix</keyword>
<evidence type="ECO:0000250" key="1">
    <source>
        <dbReference type="UniProtKB" id="Q61730"/>
    </source>
</evidence>
<evidence type="ECO:0000255" key="2"/>
<evidence type="ECO:0000255" key="3">
    <source>
        <dbReference type="PROSITE-ProRule" id="PRU00114"/>
    </source>
</evidence>
<evidence type="ECO:0000255" key="4">
    <source>
        <dbReference type="PROSITE-ProRule" id="PRU00204"/>
    </source>
</evidence>
<evidence type="ECO:0000256" key="5">
    <source>
        <dbReference type="SAM" id="MobiDB-lite"/>
    </source>
</evidence>
<evidence type="ECO:0000269" key="6">
    <source>
    </source>
</evidence>
<evidence type="ECO:0000269" key="7">
    <source>
    </source>
</evidence>
<evidence type="ECO:0000269" key="8">
    <source>
    </source>
</evidence>
<evidence type="ECO:0000269" key="9">
    <source>
    </source>
</evidence>
<evidence type="ECO:0000269" key="10">
    <source>
    </source>
</evidence>
<evidence type="ECO:0000269" key="11">
    <source>
    </source>
</evidence>
<evidence type="ECO:0000269" key="12">
    <source>
    </source>
</evidence>
<evidence type="ECO:0000269" key="13">
    <source>
    </source>
</evidence>
<evidence type="ECO:0000269" key="14">
    <source>
    </source>
</evidence>
<evidence type="ECO:0000269" key="15">
    <source>
    </source>
</evidence>
<evidence type="ECO:0000269" key="16">
    <source>
    </source>
</evidence>
<evidence type="ECO:0000269" key="17">
    <source>
    </source>
</evidence>
<evidence type="ECO:0000303" key="18">
    <source>
    </source>
</evidence>
<evidence type="ECO:0000303" key="19">
    <source>
    </source>
</evidence>
<evidence type="ECO:0000303" key="20">
    <source>
    </source>
</evidence>
<evidence type="ECO:0000303" key="21">
    <source>
    </source>
</evidence>
<evidence type="ECO:0000303" key="22">
    <source>
    </source>
</evidence>
<evidence type="ECO:0000305" key="23"/>
<evidence type="ECO:0000305" key="24">
    <source>
    </source>
</evidence>
<evidence type="ECO:0000305" key="25">
    <source>
    </source>
</evidence>
<evidence type="ECO:0007744" key="26">
    <source>
    </source>
</evidence>
<evidence type="ECO:0007744" key="27">
    <source>
    </source>
</evidence>
<evidence type="ECO:0007829" key="28">
    <source>
        <dbReference type="PDB" id="3O4O"/>
    </source>
</evidence>
<evidence type="ECO:0007829" key="29">
    <source>
        <dbReference type="PDB" id="4DEP"/>
    </source>
</evidence>
<evidence type="ECO:0007829" key="30">
    <source>
        <dbReference type="PDB" id="7FCC"/>
    </source>
</evidence>
<proteinExistence type="evidence at protein level"/>
<name>IL1AP_HUMAN</name>
<sequence length="570" mass="65418">MTLLWCVVSLYFYGILQSDASERCDDWGLDTMRQIQVFEDEPARIKCPLFEHFLKFNYSTAHSAGLTLIWYWTRQDRDLEEPINFRLPENRISKEKDVLWFRPTLLNDTGNYTCMLRNTTYCSKVAFPLEVVQKDSCFNSPMKLPVHKLYIEYGIQRITCPNVDGYFPSSVKPTITWYMGCYKIQNFNNVIPEGMNLSFLIALISNNGNYTCVVTYPENGRTFHLTRTLTVKVVGSPKNAVPPVIHSPNDHVVYEKEPGEELLIPCTVYFSFLMDSRNEVWWTIDGKKPDDITIDVTINESISHSRTEDETRTQILSIKKVTSEDLKRSYVCHARSAKGEVAKAAKVKQKVPAPRYTVELACGFGATVLLVVILIVVYHVYWLEMVLFYRAHFGTDETILDGKEYDIYVSYARNAEEEEFVLLTLRGVLENEFGYKLCIFDRDSLPGGIVTDETLSFIQKSRRLLVVLSPNYVLQGTQALLELKAGLENMASRGNINVILVQYKAVKETKVKELKRAKTVLTVIKWKGEKSKYPQGRFWKQLQVAMPVKKSPRRSSSDEQGLSYSSLKNV</sequence>
<gene>
    <name type="primary">IL1RAP</name>
    <name type="synonym">C3orf13</name>
    <name type="synonym">IL1R3</name>
</gene>
<feature type="signal peptide" evidence="2">
    <location>
        <begin position="1"/>
        <end position="20"/>
    </location>
</feature>
<feature type="chain" id="PRO_0000015450" description="Interleukin-1 receptor accessory protein">
    <location>
        <begin position="21"/>
        <end position="570"/>
    </location>
</feature>
<feature type="topological domain" description="Extracellular" evidence="2">
    <location>
        <begin position="21"/>
        <end position="367"/>
    </location>
</feature>
<feature type="transmembrane region" description="Helical" evidence="2">
    <location>
        <begin position="368"/>
        <end position="388"/>
    </location>
</feature>
<feature type="topological domain" description="Cytoplasmic" evidence="2">
    <location>
        <begin position="389"/>
        <end position="570"/>
    </location>
</feature>
<feature type="domain" description="Ig-like C2-type 1">
    <location>
        <begin position="21"/>
        <end position="128"/>
    </location>
</feature>
<feature type="domain" description="Ig-like C2-type 2">
    <location>
        <begin position="141"/>
        <end position="230"/>
    </location>
</feature>
<feature type="domain" description="Ig-like C2-type 3">
    <location>
        <begin position="242"/>
        <end position="348"/>
    </location>
</feature>
<feature type="domain" description="TIR" evidence="4">
    <location>
        <begin position="403"/>
        <end position="546"/>
    </location>
</feature>
<feature type="region of interest" description="Essential for interaction with PTPRD" evidence="1">
    <location>
        <begin position="69"/>
        <end position="85"/>
    </location>
</feature>
<feature type="region of interest" description="Disordered" evidence="5">
    <location>
        <begin position="549"/>
        <end position="570"/>
    </location>
</feature>
<feature type="compositionally biased region" description="Polar residues" evidence="5">
    <location>
        <begin position="558"/>
        <end position="570"/>
    </location>
</feature>
<feature type="active site" evidence="4">
    <location>
        <position position="482"/>
    </location>
</feature>
<feature type="modified residue" description="Phosphoserine" evidence="26 27">
    <location>
        <position position="557"/>
    </location>
</feature>
<feature type="glycosylation site" description="N-linked (GlcNAc...) asparagine" evidence="2">
    <location>
        <position position="57"/>
    </location>
</feature>
<feature type="glycosylation site" description="N-linked (GlcNAc...) asparagine" evidence="11">
    <location>
        <position position="107"/>
    </location>
</feature>
<feature type="glycosylation site" description="N-linked (GlcNAc...) asparagine" evidence="11">
    <location>
        <position position="111"/>
    </location>
</feature>
<feature type="glycosylation site" description="N-linked (GlcNAc...) asparagine" evidence="11">
    <location>
        <position position="118"/>
    </location>
</feature>
<feature type="glycosylation site" description="N-linked (GlcNAc...) asparagine" evidence="2">
    <location>
        <position position="196"/>
    </location>
</feature>
<feature type="glycosylation site" description="N-linked (GlcNAc...) asparagine" evidence="11">
    <location>
        <position position="209"/>
    </location>
</feature>
<feature type="glycosylation site" description="N-linked (GlcNAc...) asparagine" evidence="2">
    <location>
        <position position="299"/>
    </location>
</feature>
<feature type="disulfide bond" evidence="3 11">
    <location>
        <begin position="24"/>
        <end position="122"/>
    </location>
</feature>
<feature type="disulfide bond" evidence="3 11">
    <location>
        <begin position="47"/>
        <end position="114"/>
    </location>
</feature>
<feature type="disulfide bond" evidence="3 11">
    <location>
        <begin position="137"/>
        <end position="181"/>
    </location>
</feature>
<feature type="disulfide bond" evidence="3 11">
    <location>
        <begin position="160"/>
        <end position="212"/>
    </location>
</feature>
<feature type="disulfide bond" evidence="3 11">
    <location>
        <begin position="266"/>
        <end position="332"/>
    </location>
</feature>
<feature type="splice variant" id="VSP_008052" description="In isoform 3." evidence="19">
    <original>ISHSRTEDETRTQILSIKKVTSEDLKRSYVCHARSAKGEVAKAAKVKQKVPAPRYTVELACGFGATVLLVVILIVVYHVYWLEMVLFYRAHFGTDETILDGKEYDIYVSYARNAEEEEFVLLTLRGVLENEFGYKLCIFDRDSLPGGIVTDETLSFIQKSRRLLVVLSPNYVLQGTQALLELKAGLENMASRGNINVILVQYKAVKETKVKELKRAKTVLTVIKWKGEKSKYPQGRFWKQLQVAMPVKKSPRRSSSDEQGLSYSSLKNV</original>
    <variation>ASSKIHSGTGLWFWSHSPASGDSHCCLPCLLARDGPILPGSFWNR</variation>
    <location>
        <begin position="302"/>
        <end position="570"/>
    </location>
</feature>
<feature type="splice variant" id="VSP_008050" description="In isoform 2." evidence="18 19 20">
    <original>VPAPRY</original>
    <variation>GNRCGQ</variation>
    <location>
        <begin position="351"/>
        <end position="356"/>
    </location>
</feature>
<feature type="splice variant" id="VSP_008051" description="In isoform 2." evidence="18 19 20">
    <location>
        <begin position="357"/>
        <end position="570"/>
    </location>
</feature>
<feature type="splice variant" id="VSP_041256" description="In isoform 4." evidence="21 22">
    <original>IVTDETLSFIQKSRRLLVVLSPNYVLQGTQALLELKAGLENMASRGNINVILVQYKAVKETKVKELKRAKTVLTVIKWKGEKSKYPQGRFWKQLQVAMPVKKSPRRSSSDEQGLSYSSLKNV</original>
    <variation>NTVEAVFDFIQRSRRMIVVLSPDYVTEKSISMLEFKLGVMCQNSIATKLIVVEYRPLEHPHPGILQLKESVSFVSWKGEKSKHSGSKFWKALRLALPLRSLSASSGWNESCSSQSDISLDHVQRRRSRLKEPPELQSSERAAGSPPAPGTMSKHRGKSSATCRCCVTYCEGENHLRNKSRAEIHNQPQWETHLCKPVPQESETQWIQNGTRLEPPAPQISALALHHFTDLSNNNDFYIL</variation>
    <location>
        <begin position="449"/>
        <end position="570"/>
    </location>
</feature>
<feature type="sequence variant" id="VAR_053383" description="In dbSNP:rs34661910.">
    <original>V</original>
    <variation>M</variation>
    <location>
        <position position="473"/>
    </location>
</feature>
<feature type="strand" evidence="29">
    <location>
        <begin position="25"/>
        <end position="29"/>
    </location>
</feature>
<feature type="strand" evidence="28">
    <location>
        <begin position="31"/>
        <end position="33"/>
    </location>
</feature>
<feature type="strand" evidence="29">
    <location>
        <begin position="36"/>
        <end position="38"/>
    </location>
</feature>
<feature type="strand" evidence="29">
    <location>
        <begin position="43"/>
        <end position="46"/>
    </location>
</feature>
<feature type="helix" evidence="29">
    <location>
        <begin position="49"/>
        <end position="53"/>
    </location>
</feature>
<feature type="strand" evidence="29">
    <location>
        <begin position="54"/>
        <end position="56"/>
    </location>
</feature>
<feature type="helix" evidence="29">
    <location>
        <begin position="58"/>
        <end position="63"/>
    </location>
</feature>
<feature type="strand" evidence="29">
    <location>
        <begin position="67"/>
        <end position="76"/>
    </location>
</feature>
<feature type="strand" evidence="29">
    <location>
        <begin position="80"/>
        <end position="82"/>
    </location>
</feature>
<feature type="helix" evidence="29">
    <location>
        <begin position="88"/>
        <end position="90"/>
    </location>
</feature>
<feature type="strand" evidence="29">
    <location>
        <begin position="92"/>
        <end position="95"/>
    </location>
</feature>
<feature type="strand" evidence="29">
    <location>
        <begin position="98"/>
        <end position="103"/>
    </location>
</feature>
<feature type="helix" evidence="29">
    <location>
        <begin position="106"/>
        <end position="108"/>
    </location>
</feature>
<feature type="strand" evidence="29">
    <location>
        <begin position="110"/>
        <end position="117"/>
    </location>
</feature>
<feature type="strand" evidence="29">
    <location>
        <begin position="122"/>
        <end position="132"/>
    </location>
</feature>
<feature type="strand" evidence="29">
    <location>
        <begin position="146"/>
        <end position="150"/>
    </location>
</feature>
<feature type="strand" evidence="29">
    <location>
        <begin position="154"/>
        <end position="159"/>
    </location>
</feature>
<feature type="strand" evidence="29">
    <location>
        <begin position="174"/>
        <end position="179"/>
    </location>
</feature>
<feature type="strand" evidence="29">
    <location>
        <begin position="188"/>
        <end position="193"/>
    </location>
</feature>
<feature type="strand" evidence="29">
    <location>
        <begin position="196"/>
        <end position="201"/>
    </location>
</feature>
<feature type="helix" evidence="29">
    <location>
        <begin position="204"/>
        <end position="206"/>
    </location>
</feature>
<feature type="strand" evidence="29">
    <location>
        <begin position="208"/>
        <end position="218"/>
    </location>
</feature>
<feature type="strand" evidence="29">
    <location>
        <begin position="221"/>
        <end position="234"/>
    </location>
</feature>
<feature type="helix" evidence="29">
    <location>
        <begin position="237"/>
        <end position="239"/>
    </location>
</feature>
<feature type="strand" evidence="29">
    <location>
        <begin position="244"/>
        <end position="248"/>
    </location>
</feature>
<feature type="strand" evidence="28">
    <location>
        <begin position="250"/>
        <end position="252"/>
    </location>
</feature>
<feature type="strand" evidence="29">
    <location>
        <begin position="266"/>
        <end position="270"/>
    </location>
</feature>
<feature type="strand" evidence="29">
    <location>
        <begin position="279"/>
        <end position="285"/>
    </location>
</feature>
<feature type="strand" evidence="29">
    <location>
        <begin position="300"/>
        <end position="303"/>
    </location>
</feature>
<feature type="strand" evidence="29">
    <location>
        <begin position="310"/>
        <end position="314"/>
    </location>
</feature>
<feature type="turn" evidence="28">
    <location>
        <begin position="323"/>
        <end position="327"/>
    </location>
</feature>
<feature type="strand" evidence="29">
    <location>
        <begin position="331"/>
        <end position="335"/>
    </location>
</feature>
<feature type="strand" evidence="29">
    <location>
        <begin position="340"/>
        <end position="344"/>
    </location>
</feature>
<feature type="strand" evidence="30">
    <location>
        <begin position="405"/>
        <end position="410"/>
    </location>
</feature>
<feature type="helix" evidence="30">
    <location>
        <begin position="415"/>
        <end position="422"/>
    </location>
</feature>
<feature type="helix" evidence="30">
    <location>
        <begin position="424"/>
        <end position="431"/>
    </location>
</feature>
<feature type="helix" evidence="30">
    <location>
        <begin position="440"/>
        <end position="443"/>
    </location>
</feature>
<feature type="strand" evidence="30">
    <location>
        <begin position="446"/>
        <end position="448"/>
    </location>
</feature>
<feature type="helix" evidence="30">
    <location>
        <begin position="450"/>
        <end position="459"/>
    </location>
</feature>
<feature type="strand" evidence="30">
    <location>
        <begin position="461"/>
        <end position="468"/>
    </location>
</feature>
<feature type="turn" evidence="30">
    <location>
        <begin position="470"/>
        <end position="473"/>
    </location>
</feature>
<feature type="helix" evidence="30">
    <location>
        <begin position="478"/>
        <end position="493"/>
    </location>
</feature>
<feature type="strand" evidence="30">
    <location>
        <begin position="497"/>
        <end position="504"/>
    </location>
</feature>
<feature type="helix" evidence="30">
    <location>
        <begin position="511"/>
        <end position="515"/>
    </location>
</feature>
<feature type="strand" evidence="30">
    <location>
        <begin position="522"/>
        <end position="525"/>
    </location>
</feature>
<feature type="helix" evidence="30">
    <location>
        <begin position="529"/>
        <end position="532"/>
    </location>
</feature>
<feature type="helix" evidence="30">
    <location>
        <begin position="537"/>
        <end position="545"/>
    </location>
</feature>
<dbReference type="EC" id="3.2.2.6" evidence="4"/>
<dbReference type="EMBL" id="AF029213">
    <property type="protein sequence ID" value="AAB84059.1"/>
    <property type="molecule type" value="mRNA"/>
</dbReference>
<dbReference type="EMBL" id="AB006537">
    <property type="protein sequence ID" value="BAA25421.1"/>
    <property type="molecule type" value="mRNA"/>
</dbReference>
<dbReference type="EMBL" id="AF167343">
    <property type="protein sequence ID" value="AAF71687.1"/>
    <property type="molecule type" value="mRNA"/>
</dbReference>
<dbReference type="EMBL" id="AF167340">
    <property type="protein sequence ID" value="AAF71688.1"/>
    <property type="molecule type" value="Genomic_DNA"/>
</dbReference>
<dbReference type="EMBL" id="AF167335">
    <property type="protein sequence ID" value="AAF71688.1"/>
    <property type="status" value="JOINED"/>
    <property type="molecule type" value="Genomic_DNA"/>
</dbReference>
<dbReference type="EMBL" id="AF167336">
    <property type="protein sequence ID" value="AAF71688.1"/>
    <property type="status" value="JOINED"/>
    <property type="molecule type" value="Genomic_DNA"/>
</dbReference>
<dbReference type="EMBL" id="AF167337">
    <property type="protein sequence ID" value="AAF71688.1"/>
    <property type="status" value="JOINED"/>
    <property type="molecule type" value="Genomic_DNA"/>
</dbReference>
<dbReference type="EMBL" id="AF167338">
    <property type="protein sequence ID" value="AAF71688.1"/>
    <property type="status" value="JOINED"/>
    <property type="molecule type" value="Genomic_DNA"/>
</dbReference>
<dbReference type="EMBL" id="AF167339">
    <property type="protein sequence ID" value="AAF71688.1"/>
    <property type="status" value="JOINED"/>
    <property type="molecule type" value="Genomic_DNA"/>
</dbReference>
<dbReference type="EMBL" id="AF167342">
    <property type="protein sequence ID" value="AAF71689.1"/>
    <property type="molecule type" value="Genomic_DNA"/>
</dbReference>
<dbReference type="EMBL" id="AF167335">
    <property type="protein sequence ID" value="AAF71689.1"/>
    <property type="status" value="JOINED"/>
    <property type="molecule type" value="Genomic_DNA"/>
</dbReference>
<dbReference type="EMBL" id="AF167336">
    <property type="protein sequence ID" value="AAF71689.1"/>
    <property type="status" value="JOINED"/>
    <property type="molecule type" value="Genomic_DNA"/>
</dbReference>
<dbReference type="EMBL" id="AF167337">
    <property type="protein sequence ID" value="AAF71689.1"/>
    <property type="status" value="JOINED"/>
    <property type="molecule type" value="Genomic_DNA"/>
</dbReference>
<dbReference type="EMBL" id="AF167338">
    <property type="protein sequence ID" value="AAF71689.1"/>
    <property type="status" value="JOINED"/>
    <property type="molecule type" value="Genomic_DNA"/>
</dbReference>
<dbReference type="EMBL" id="AF167339">
    <property type="protein sequence ID" value="AAF71689.1"/>
    <property type="status" value="JOINED"/>
    <property type="molecule type" value="Genomic_DNA"/>
</dbReference>
<dbReference type="EMBL" id="AF167340">
    <property type="protein sequence ID" value="AAF71689.1"/>
    <property type="status" value="JOINED"/>
    <property type="molecule type" value="Genomic_DNA"/>
</dbReference>
<dbReference type="EMBL" id="AF167341">
    <property type="protein sequence ID" value="AAF71689.1"/>
    <property type="status" value="JOINED"/>
    <property type="molecule type" value="Genomic_DNA"/>
</dbReference>
<dbReference type="EMBL" id="AF538730">
    <property type="protein sequence ID" value="AAQ01755.1"/>
    <property type="molecule type" value="mRNA"/>
</dbReference>
<dbReference type="EMBL" id="AF538731">
    <property type="protein sequence ID" value="AAQ01756.1"/>
    <property type="molecule type" value="mRNA"/>
</dbReference>
<dbReference type="EMBL" id="AF538732">
    <property type="protein sequence ID" value="AAQ01757.1"/>
    <property type="molecule type" value="mRNA"/>
</dbReference>
<dbReference type="EMBL" id="AF538733">
    <property type="protein sequence ID" value="AAQ01758.1"/>
    <property type="molecule type" value="mRNA"/>
</dbReference>
<dbReference type="EMBL" id="AF538734">
    <property type="protein sequence ID" value="AAQ01759.1"/>
    <property type="molecule type" value="mRNA"/>
</dbReference>
<dbReference type="EMBL" id="AF487335">
    <property type="protein sequence ID" value="AAO49451.1"/>
    <property type="molecule type" value="mRNA"/>
</dbReference>
<dbReference type="EMBL" id="EF591790">
    <property type="protein sequence ID" value="ABU90811.1"/>
    <property type="molecule type" value="mRNA"/>
</dbReference>
<dbReference type="EMBL" id="FJ998418">
    <property type="protein sequence ID" value="ACR82488.1"/>
    <property type="molecule type" value="mRNA"/>
</dbReference>
<dbReference type="EMBL" id="AC008249">
    <property type="status" value="NOT_ANNOTATED_CDS"/>
    <property type="molecule type" value="Genomic_DNA"/>
</dbReference>
<dbReference type="EMBL" id="AC108747">
    <property type="status" value="NOT_ANNOTATED_CDS"/>
    <property type="molecule type" value="Genomic_DNA"/>
</dbReference>
<dbReference type="EMBL" id="CH471052">
    <property type="protein sequence ID" value="EAW78100.1"/>
    <property type="molecule type" value="Genomic_DNA"/>
</dbReference>
<dbReference type="EMBL" id="CH471052">
    <property type="protein sequence ID" value="EAW78102.1"/>
    <property type="molecule type" value="Genomic_DNA"/>
</dbReference>
<dbReference type="EMBL" id="BC053621">
    <property type="protein sequence ID" value="AAH53621.1"/>
    <property type="molecule type" value="mRNA"/>
</dbReference>
<dbReference type="EMBL" id="AF016261">
    <property type="protein sequence ID" value="AAC39609.1"/>
    <property type="molecule type" value="Genomic_DNA"/>
</dbReference>
<dbReference type="CCDS" id="CCDS3298.1">
    <molecule id="Q9NPH3-1"/>
</dbReference>
<dbReference type="CCDS" id="CCDS46982.1">
    <molecule id="Q9NPH3-2"/>
</dbReference>
<dbReference type="CCDS" id="CCDS54696.1">
    <molecule id="Q9NPH3-5"/>
</dbReference>
<dbReference type="RefSeq" id="NP_001161400.1">
    <molecule id="Q9NPH3-1"/>
    <property type="nucleotide sequence ID" value="NM_001167928.2"/>
</dbReference>
<dbReference type="RefSeq" id="NP_001161401.1">
    <molecule id="Q9NPH3-1"/>
    <property type="nucleotide sequence ID" value="NM_001167929.2"/>
</dbReference>
<dbReference type="RefSeq" id="NP_001161402.1">
    <molecule id="Q9NPH3-2"/>
    <property type="nucleotide sequence ID" value="NM_001167930.2"/>
</dbReference>
<dbReference type="RefSeq" id="NP_001161403.1">
    <molecule id="Q9NPH3-5"/>
    <property type="nucleotide sequence ID" value="NM_001167931.2"/>
</dbReference>
<dbReference type="RefSeq" id="NP_001351808.1">
    <molecule id="Q9NPH3-5"/>
    <property type="nucleotide sequence ID" value="NM_001364879.1"/>
</dbReference>
<dbReference type="RefSeq" id="NP_001351810.1">
    <molecule id="Q9NPH3-1"/>
    <property type="nucleotide sequence ID" value="NM_001364881.2"/>
</dbReference>
<dbReference type="RefSeq" id="NP_002173.1">
    <molecule id="Q9NPH3-1"/>
    <property type="nucleotide sequence ID" value="NM_002182.4"/>
</dbReference>
<dbReference type="RefSeq" id="NP_608273.1">
    <molecule id="Q9NPH3-2"/>
    <property type="nucleotide sequence ID" value="NM_134470.4"/>
</dbReference>
<dbReference type="RefSeq" id="XP_047304037.1">
    <molecule id="Q9NPH3-1"/>
    <property type="nucleotide sequence ID" value="XM_047448081.1"/>
</dbReference>
<dbReference type="RefSeq" id="XP_047304038.1">
    <molecule id="Q9NPH3-1"/>
    <property type="nucleotide sequence ID" value="XM_047448082.1"/>
</dbReference>
<dbReference type="RefSeq" id="XP_047304039.1">
    <molecule id="Q9NPH3-1"/>
    <property type="nucleotide sequence ID" value="XM_047448083.1"/>
</dbReference>
<dbReference type="RefSeq" id="XP_047304040.1">
    <molecule id="Q9NPH3-1"/>
    <property type="nucleotide sequence ID" value="XM_047448084.1"/>
</dbReference>
<dbReference type="RefSeq" id="XP_054202423.1">
    <molecule id="Q9NPH3-1"/>
    <property type="nucleotide sequence ID" value="XM_054346448.1"/>
</dbReference>
<dbReference type="RefSeq" id="XP_054202424.1">
    <molecule id="Q9NPH3-1"/>
    <property type="nucleotide sequence ID" value="XM_054346449.1"/>
</dbReference>
<dbReference type="RefSeq" id="XP_054202425.1">
    <molecule id="Q9NPH3-1"/>
    <property type="nucleotide sequence ID" value="XM_054346450.1"/>
</dbReference>
<dbReference type="RefSeq" id="XP_054202426.1">
    <molecule id="Q9NPH3-1"/>
    <property type="nucleotide sequence ID" value="XM_054346451.1"/>
</dbReference>
<dbReference type="PDB" id="3O4O">
    <property type="method" value="X-ray"/>
    <property type="resolution" value="3.30 A"/>
    <property type="chains" value="B=21-350"/>
</dbReference>
<dbReference type="PDB" id="4DEP">
    <property type="method" value="X-ray"/>
    <property type="resolution" value="3.10 A"/>
    <property type="chains" value="C/F=21-367"/>
</dbReference>
<dbReference type="PDB" id="7FCC">
    <property type="method" value="X-ray"/>
    <property type="resolution" value="2.14 A"/>
    <property type="chains" value="A=403-549"/>
</dbReference>
<dbReference type="PDBsum" id="3O4O"/>
<dbReference type="PDBsum" id="4DEP"/>
<dbReference type="PDBsum" id="7FCC"/>
<dbReference type="SASBDB" id="Q9NPH3"/>
<dbReference type="SMR" id="Q9NPH3"/>
<dbReference type="BioGRID" id="109771">
    <property type="interactions" value="41"/>
</dbReference>
<dbReference type="ComplexPortal" id="CPX-10322">
    <property type="entry name" value="IL33 receptor-ligand complex"/>
</dbReference>
<dbReference type="ComplexPortal" id="CPX-10338">
    <property type="entry name" value="Interleukin-36A receptor ligand complex"/>
</dbReference>
<dbReference type="ComplexPortal" id="CPX-10340">
    <property type="entry name" value="Interleukin-36B receptor ligand complex"/>
</dbReference>
<dbReference type="ComplexPortal" id="CPX-10341">
    <property type="entry name" value="Interleukin-36G receptor ligand complex"/>
</dbReference>
<dbReference type="ComplexPortal" id="CPX-522">
    <property type="entry name" value="Interleukin-1 beta ligand-decoy receptor type 2 complex"/>
</dbReference>
<dbReference type="ComplexPortal" id="CPX-527">
    <property type="entry name" value="Interleukin-1 beta ligand-membrane bound receptor type 1 complex"/>
</dbReference>
<dbReference type="ComplexPortal" id="CPX-8830">
    <property type="entry name" value="Interleukin-1 alpha-soluble receptor type 1 complex"/>
</dbReference>
<dbReference type="ComplexPortal" id="CPX-9128">
    <property type="entry name" value="Interleukin-1 beta ligand-soluble receptor type 1 complex"/>
</dbReference>
<dbReference type="ComplexPortal" id="CPX-9166">
    <property type="entry name" value="Precursor interleukin-1 alpha-soluble receptor type 1 complex"/>
</dbReference>
<dbReference type="ComplexPortal" id="CPX-9168">
    <property type="entry name" value="Interleukin-1 alpha decoy receptor-ligand type 2 complex"/>
</dbReference>
<dbReference type="ComplexPortal" id="CPX-9169">
    <property type="entry name" value="Precursor interleukin-1 alpha-membrane-bound receptor type 1 complex"/>
</dbReference>
<dbReference type="ComplexPortal" id="CPX-9173">
    <property type="entry name" value="Interleukin-1 alpha-membrane-bound receptor type 1 complex"/>
</dbReference>
<dbReference type="CORUM" id="Q9NPH3"/>
<dbReference type="DIP" id="DIP-33487N"/>
<dbReference type="FunCoup" id="Q9NPH3">
    <property type="interactions" value="1689"/>
</dbReference>
<dbReference type="IntAct" id="Q9NPH3">
    <property type="interactions" value="28"/>
</dbReference>
<dbReference type="MINT" id="Q9NPH3"/>
<dbReference type="STRING" id="9606.ENSP00000314807"/>
<dbReference type="ChEMBL" id="CHEMBL4665591"/>
<dbReference type="ChEMBL" id="CHEMBL4804256"/>
<dbReference type="DrugCentral" id="Q9NPH3"/>
<dbReference type="GuidetoPHARMACOLOGY" id="1897"/>
<dbReference type="GlyConnect" id="1425">
    <property type="glycosylation" value="13 N-Linked glycans (3 sites)"/>
</dbReference>
<dbReference type="GlyCosmos" id="Q9NPH3">
    <property type="glycosylation" value="7 sites, 13 glycans"/>
</dbReference>
<dbReference type="GlyGen" id="Q9NPH3">
    <property type="glycosylation" value="9 sites, 20 N-linked glycans (5 sites)"/>
</dbReference>
<dbReference type="iPTMnet" id="Q9NPH3"/>
<dbReference type="PhosphoSitePlus" id="Q9NPH3"/>
<dbReference type="BioMuta" id="IL1RAP"/>
<dbReference type="DMDM" id="34222652"/>
<dbReference type="CPTAC" id="CPTAC-2221"/>
<dbReference type="jPOST" id="Q9NPH3"/>
<dbReference type="MassIVE" id="Q9NPH3"/>
<dbReference type="PeptideAtlas" id="Q9NPH3"/>
<dbReference type="ProteomicsDB" id="81999">
    <molecule id="Q9NPH3-1"/>
</dbReference>
<dbReference type="ProteomicsDB" id="82000">
    <molecule id="Q9NPH3-2"/>
</dbReference>
<dbReference type="ProteomicsDB" id="82001">
    <molecule id="Q9NPH3-3"/>
</dbReference>
<dbReference type="ProteomicsDB" id="82002">
    <molecule id="Q9NPH3-5"/>
</dbReference>
<dbReference type="Pumba" id="Q9NPH3"/>
<dbReference type="ABCD" id="Q9NPH3">
    <property type="antibodies" value="17 sequenced antibodies"/>
</dbReference>
<dbReference type="Antibodypedia" id="19361">
    <property type="antibodies" value="431 antibodies from 40 providers"/>
</dbReference>
<dbReference type="DNASU" id="3556"/>
<dbReference type="Ensembl" id="ENST00000072516.7">
    <molecule id="Q9NPH3-1"/>
    <property type="protein sequence ID" value="ENSP00000072516.3"/>
    <property type="gene ID" value="ENSG00000196083.11"/>
</dbReference>
<dbReference type="Ensembl" id="ENST00000317757.8">
    <molecule id="Q9NPH3-5"/>
    <property type="protein sequence ID" value="ENSP00000314807.3"/>
    <property type="gene ID" value="ENSG00000196083.11"/>
</dbReference>
<dbReference type="Ensembl" id="ENST00000342550.6">
    <molecule id="Q9NPH3-3"/>
    <property type="protein sequence ID" value="ENSP00000345829.2"/>
    <property type="gene ID" value="ENSG00000196083.11"/>
</dbReference>
<dbReference type="Ensembl" id="ENST00000413869.5">
    <molecule id="Q9NPH3-3"/>
    <property type="protein sequence ID" value="ENSP00000416296.1"/>
    <property type="gene ID" value="ENSG00000196083.11"/>
</dbReference>
<dbReference type="Ensembl" id="ENST00000422485.5">
    <molecule id="Q9NPH3-2"/>
    <property type="protein sequence ID" value="ENSP00000409352.1"/>
    <property type="gene ID" value="ENSG00000196083.11"/>
</dbReference>
<dbReference type="Ensembl" id="ENST00000422940.5">
    <molecule id="Q9NPH3-2"/>
    <property type="protein sequence ID" value="ENSP00000387371.1"/>
    <property type="gene ID" value="ENSG00000196083.11"/>
</dbReference>
<dbReference type="Ensembl" id="ENST00000439062.6">
    <molecule id="Q9NPH3-1"/>
    <property type="protein sequence ID" value="ENSP00000401132.1"/>
    <property type="gene ID" value="ENSG00000196083.11"/>
</dbReference>
<dbReference type="Ensembl" id="ENST00000447382.6">
    <molecule id="Q9NPH3-1"/>
    <property type="protein sequence ID" value="ENSP00000390541.1"/>
    <property type="gene ID" value="ENSG00000196083.11"/>
</dbReference>
<dbReference type="GeneID" id="3556"/>
<dbReference type="KEGG" id="hsa:3556"/>
<dbReference type="MANE-Select" id="ENST00000447382.6">
    <property type="protein sequence ID" value="ENSP00000390541.1"/>
    <property type="RefSeq nucleotide sequence ID" value="NM_002182.4"/>
    <property type="RefSeq protein sequence ID" value="NP_002173.1"/>
</dbReference>
<dbReference type="UCSC" id="uc003fsk.4">
    <molecule id="Q9NPH3-1"/>
    <property type="organism name" value="human"/>
</dbReference>
<dbReference type="AGR" id="HGNC:5995"/>
<dbReference type="CTD" id="3556"/>
<dbReference type="DisGeNET" id="3556"/>
<dbReference type="GeneCards" id="IL1RAP"/>
<dbReference type="HGNC" id="HGNC:5995">
    <property type="gene designation" value="IL1RAP"/>
</dbReference>
<dbReference type="HPA" id="ENSG00000196083">
    <property type="expression patterns" value="Tissue enriched (liver)"/>
</dbReference>
<dbReference type="MIM" id="602626">
    <property type="type" value="gene"/>
</dbReference>
<dbReference type="neXtProt" id="NX_Q9NPH3"/>
<dbReference type="OpenTargets" id="ENSG00000196083"/>
<dbReference type="PharmGKB" id="PA29811"/>
<dbReference type="VEuPathDB" id="HostDB:ENSG00000196083"/>
<dbReference type="GeneTree" id="ENSGT01090000260076"/>
<dbReference type="HOGENOM" id="CLU_025552_1_0_1"/>
<dbReference type="InParanoid" id="Q9NPH3"/>
<dbReference type="OMA" id="YICTVRY"/>
<dbReference type="OrthoDB" id="9166379at2759"/>
<dbReference type="PAN-GO" id="Q9NPH3">
    <property type="GO annotations" value="3 GO annotations based on evolutionary models"/>
</dbReference>
<dbReference type="PhylomeDB" id="Q9NPH3"/>
<dbReference type="TreeFam" id="TF325519"/>
<dbReference type="PathwayCommons" id="Q9NPH3"/>
<dbReference type="Reactome" id="R-HSA-1257604">
    <molecule id="Q9NPH3-1"/>
    <property type="pathway name" value="PIP3 activates AKT signaling"/>
</dbReference>
<dbReference type="Reactome" id="R-HSA-388844">
    <molecule id="Q9NPH3-1"/>
    <property type="pathway name" value="Receptor-type tyrosine-protein phosphatases"/>
</dbReference>
<dbReference type="Reactome" id="R-HSA-6811558">
    <molecule id="Q9NPH3-1"/>
    <property type="pathway name" value="PI5P, PP2A and IER3 Regulate PI3K/AKT Signaling"/>
</dbReference>
<dbReference type="Reactome" id="R-HSA-9014826">
    <molecule id="Q9NPH3-1"/>
    <property type="pathway name" value="Interleukin-36 pathway"/>
</dbReference>
<dbReference type="Reactome" id="R-HSA-9014843">
    <molecule id="Q9NPH3-1"/>
    <property type="pathway name" value="Interleukin-33 signaling"/>
</dbReference>
<dbReference type="Reactome" id="R-HSA-9020702">
    <molecule id="Q9NPH3-1"/>
    <property type="pathway name" value="Interleukin-1 signaling"/>
</dbReference>
<dbReference type="SignaLink" id="Q9NPH3"/>
<dbReference type="SIGNOR" id="Q9NPH3"/>
<dbReference type="BioGRID-ORCS" id="3556">
    <property type="hits" value="16 hits in 1150 CRISPR screens"/>
</dbReference>
<dbReference type="ChiTaRS" id="IL1RAP">
    <property type="organism name" value="human"/>
</dbReference>
<dbReference type="EvolutionaryTrace" id="Q9NPH3"/>
<dbReference type="GeneWiki" id="IL1RAP"/>
<dbReference type="GenomeRNAi" id="3556"/>
<dbReference type="Pharos" id="Q9NPH3">
    <property type="development level" value="Tclin"/>
</dbReference>
<dbReference type="PRO" id="PR:Q9NPH3"/>
<dbReference type="Proteomes" id="UP000005640">
    <property type="component" value="Chromosome 3"/>
</dbReference>
<dbReference type="RNAct" id="Q9NPH3">
    <property type="molecule type" value="protein"/>
</dbReference>
<dbReference type="Bgee" id="ENSG00000196083">
    <property type="expression patterns" value="Expressed in right lobe of liver and 151 other cell types or tissues"/>
</dbReference>
<dbReference type="ExpressionAtlas" id="Q9NPH3">
    <property type="expression patterns" value="baseline and differential"/>
</dbReference>
<dbReference type="GO" id="GO:0009986">
    <property type="term" value="C:cell surface"/>
    <property type="evidence" value="ECO:0000318"/>
    <property type="project" value="GO_Central"/>
</dbReference>
<dbReference type="GO" id="GO:0005576">
    <property type="term" value="C:extracellular region"/>
    <property type="evidence" value="ECO:0007669"/>
    <property type="project" value="UniProtKB-SubCell"/>
</dbReference>
<dbReference type="GO" id="GO:0098978">
    <property type="term" value="C:glutamatergic synapse"/>
    <property type="evidence" value="ECO:0007669"/>
    <property type="project" value="Ensembl"/>
</dbReference>
<dbReference type="GO" id="GO:0016020">
    <property type="term" value="C:membrane"/>
    <property type="evidence" value="ECO:0007005"/>
    <property type="project" value="UniProtKB"/>
</dbReference>
<dbReference type="GO" id="GO:0005886">
    <property type="term" value="C:plasma membrane"/>
    <property type="evidence" value="ECO:0000318"/>
    <property type="project" value="GO_Central"/>
</dbReference>
<dbReference type="GO" id="GO:0015026">
    <property type="term" value="F:coreceptor activity"/>
    <property type="evidence" value="ECO:0000314"/>
    <property type="project" value="UniProt"/>
</dbReference>
<dbReference type="GO" id="GO:0004908">
    <property type="term" value="F:interleukin-1 receptor activity"/>
    <property type="evidence" value="ECO:0000318"/>
    <property type="project" value="GO_Central"/>
</dbReference>
<dbReference type="GO" id="GO:0002114">
    <property type="term" value="F:interleukin-33 receptor activity"/>
    <property type="evidence" value="ECO:0007669"/>
    <property type="project" value="Ensembl"/>
</dbReference>
<dbReference type="GO" id="GO:0061809">
    <property type="term" value="F:NAD+ nucleosidase activity, cyclic ADP-ribose generating"/>
    <property type="evidence" value="ECO:0007669"/>
    <property type="project" value="UniProtKB-EC"/>
</dbReference>
<dbReference type="GO" id="GO:0019221">
    <property type="term" value="P:cytokine-mediated signaling pathway"/>
    <property type="evidence" value="ECO:0000318"/>
    <property type="project" value="GO_Central"/>
</dbReference>
<dbReference type="GO" id="GO:0006955">
    <property type="term" value="P:immune response"/>
    <property type="evidence" value="ECO:0000304"/>
    <property type="project" value="ProtInc"/>
</dbReference>
<dbReference type="GO" id="GO:0006954">
    <property type="term" value="P:inflammatory response"/>
    <property type="evidence" value="ECO:0000304"/>
    <property type="project" value="ProtInc"/>
</dbReference>
<dbReference type="GO" id="GO:0045087">
    <property type="term" value="P:innate immune response"/>
    <property type="evidence" value="ECO:0007669"/>
    <property type="project" value="UniProtKB-KW"/>
</dbReference>
<dbReference type="GO" id="GO:0070498">
    <property type="term" value="P:interleukin-1-mediated signaling pathway"/>
    <property type="evidence" value="ECO:0000314"/>
    <property type="project" value="UniProt"/>
</dbReference>
<dbReference type="GO" id="GO:0038172">
    <property type="term" value="P:interleukin-33-mediated signaling pathway"/>
    <property type="evidence" value="ECO:0000314"/>
    <property type="project" value="UniProt"/>
</dbReference>
<dbReference type="GO" id="GO:0032736">
    <property type="term" value="P:positive regulation of interleukin-13 production"/>
    <property type="evidence" value="ECO:0007669"/>
    <property type="project" value="Ensembl"/>
</dbReference>
<dbReference type="GO" id="GO:0032753">
    <property type="term" value="P:positive regulation of interleukin-4 production"/>
    <property type="evidence" value="ECO:0007669"/>
    <property type="project" value="Ensembl"/>
</dbReference>
<dbReference type="GO" id="GO:0032754">
    <property type="term" value="P:positive regulation of interleukin-5 production"/>
    <property type="evidence" value="ECO:0007669"/>
    <property type="project" value="Ensembl"/>
</dbReference>
<dbReference type="GO" id="GO:0032755">
    <property type="term" value="P:positive regulation of interleukin-6 production"/>
    <property type="evidence" value="ECO:0007669"/>
    <property type="project" value="Ensembl"/>
</dbReference>
<dbReference type="GO" id="GO:0051965">
    <property type="term" value="P:positive regulation of synapse assembly"/>
    <property type="evidence" value="ECO:0000250"/>
    <property type="project" value="UniProtKB"/>
</dbReference>
<dbReference type="GO" id="GO:0065003">
    <property type="term" value="P:protein-containing complex assembly"/>
    <property type="evidence" value="ECO:0000304"/>
    <property type="project" value="ProtInc"/>
</dbReference>
<dbReference type="GO" id="GO:0099151">
    <property type="term" value="P:regulation of postsynaptic density assembly"/>
    <property type="evidence" value="ECO:0007669"/>
    <property type="project" value="Ensembl"/>
</dbReference>
<dbReference type="GO" id="GO:1905606">
    <property type="term" value="P:regulation of presynapse assembly"/>
    <property type="evidence" value="ECO:0007669"/>
    <property type="project" value="Ensembl"/>
</dbReference>
<dbReference type="GO" id="GO:0099560">
    <property type="term" value="P:synaptic membrane adhesion"/>
    <property type="evidence" value="ECO:0007669"/>
    <property type="project" value="Ensembl"/>
</dbReference>
<dbReference type="GO" id="GO:0099545">
    <property type="term" value="P:trans-synaptic signaling by trans-synaptic complex"/>
    <property type="evidence" value="ECO:0007669"/>
    <property type="project" value="Ensembl"/>
</dbReference>
<dbReference type="CDD" id="cd20992">
    <property type="entry name" value="Ig1_IL1R_like"/>
    <property type="match status" value="1"/>
</dbReference>
<dbReference type="CDD" id="cd20993">
    <property type="entry name" value="Ig2_IL-1RAP_like"/>
    <property type="match status" value="1"/>
</dbReference>
<dbReference type="CDD" id="cd20931">
    <property type="entry name" value="Ig3_IL1RAP"/>
    <property type="match status" value="1"/>
</dbReference>
<dbReference type="FunFam" id="2.60.40.10:FF:000462">
    <property type="entry name" value="Interleukin 1 receptor accessory protein"/>
    <property type="match status" value="1"/>
</dbReference>
<dbReference type="FunFam" id="2.60.40.10:FF:000634">
    <property type="entry name" value="Interleukin 1 receptor accessory protein"/>
    <property type="match status" value="1"/>
</dbReference>
<dbReference type="FunFam" id="2.60.40.10:FF:000756">
    <property type="entry name" value="Interleukin 1 receptor accessory protein"/>
    <property type="match status" value="1"/>
</dbReference>
<dbReference type="FunFam" id="3.40.50.10140:FF:000002">
    <property type="entry name" value="Interleukin 1 receptor accessory protein"/>
    <property type="match status" value="1"/>
</dbReference>
<dbReference type="Gene3D" id="2.60.40.10">
    <property type="entry name" value="Immunoglobulins"/>
    <property type="match status" value="3"/>
</dbReference>
<dbReference type="Gene3D" id="3.40.50.10140">
    <property type="entry name" value="Toll/interleukin-1 receptor homology (TIR) domain"/>
    <property type="match status" value="1"/>
</dbReference>
<dbReference type="InterPro" id="IPR007110">
    <property type="entry name" value="Ig-like_dom"/>
</dbReference>
<dbReference type="InterPro" id="IPR036179">
    <property type="entry name" value="Ig-like_dom_sf"/>
</dbReference>
<dbReference type="InterPro" id="IPR013783">
    <property type="entry name" value="Ig-like_fold"/>
</dbReference>
<dbReference type="InterPro" id="IPR003599">
    <property type="entry name" value="Ig_sub"/>
</dbReference>
<dbReference type="InterPro" id="IPR015621">
    <property type="entry name" value="IL-1_rcpt_fam"/>
</dbReference>
<dbReference type="InterPro" id="IPR004074">
    <property type="entry name" value="IL-1_rcpt_I/II-typ"/>
</dbReference>
<dbReference type="InterPro" id="IPR041416">
    <property type="entry name" value="IL-1RAcP-like_ig"/>
</dbReference>
<dbReference type="InterPro" id="IPR000157">
    <property type="entry name" value="TIR_dom"/>
</dbReference>
<dbReference type="InterPro" id="IPR035897">
    <property type="entry name" value="Toll_tir_struct_dom_sf"/>
</dbReference>
<dbReference type="PANTHER" id="PTHR11890:SF20">
    <property type="entry name" value="INTERLEUKIN-1 RECEPTOR ACCESSORY PROTEIN"/>
    <property type="match status" value="1"/>
</dbReference>
<dbReference type="PANTHER" id="PTHR11890">
    <property type="entry name" value="INTERLEUKIN-1 RECEPTOR FAMILY MEMBER"/>
    <property type="match status" value="1"/>
</dbReference>
<dbReference type="Pfam" id="PF18452">
    <property type="entry name" value="Ig_6"/>
    <property type="match status" value="1"/>
</dbReference>
<dbReference type="Pfam" id="PF01582">
    <property type="entry name" value="TIR"/>
    <property type="match status" value="1"/>
</dbReference>
<dbReference type="PRINTS" id="PR01536">
    <property type="entry name" value="INTRLKN1R12F"/>
</dbReference>
<dbReference type="PRINTS" id="PR01537">
    <property type="entry name" value="INTRLKN1R1F"/>
</dbReference>
<dbReference type="SMART" id="SM00409">
    <property type="entry name" value="IG"/>
    <property type="match status" value="3"/>
</dbReference>
<dbReference type="SMART" id="SM00255">
    <property type="entry name" value="TIR"/>
    <property type="match status" value="1"/>
</dbReference>
<dbReference type="SUPFAM" id="SSF48726">
    <property type="entry name" value="Immunoglobulin"/>
    <property type="match status" value="3"/>
</dbReference>
<dbReference type="SUPFAM" id="SSF52200">
    <property type="entry name" value="Toll/Interleukin receptor TIR domain"/>
    <property type="match status" value="1"/>
</dbReference>
<dbReference type="PROSITE" id="PS50835">
    <property type="entry name" value="IG_LIKE"/>
    <property type="match status" value="2"/>
</dbReference>
<dbReference type="PROSITE" id="PS50104">
    <property type="entry name" value="TIR"/>
    <property type="match status" value="1"/>
</dbReference>
<accession>Q9NPH3</accession>
<accession>B1NLD0</accession>
<accession>D3DNW0</accession>
<accession>O14915</accession>
<accession>Q86WJ7</accession>
<reference key="1">
    <citation type="journal article" date="1997" name="Proc. Natl. Acad. Sci. U.S.A.">
        <title>Recruitment of IRAK to the interleukin 1 receptor complex requires interleukin 1 receptor accessory protein.</title>
        <authorList>
            <person name="Huang J."/>
            <person name="Gao X."/>
            <person name="Li S."/>
            <person name="Cao Z."/>
        </authorList>
    </citation>
    <scope>NUCLEOTIDE SEQUENCE [MRNA] (ISOFORM 1)</scope>
    <scope>FUNCTION</scope>
    <scope>INTERACTION WITH IL1R1 AND IRAK1</scope>
    <source>
        <tissue>Placenta</tissue>
    </source>
</reference>
<reference key="2">
    <citation type="submission" date="1997-08" db="EMBL/GenBank/DDBJ databases">
        <authorList>
            <person name="Saito T."/>
            <person name="Seki N."/>
        </authorList>
    </citation>
    <scope>NUCLEOTIDE SEQUENCE [MRNA] (ISOFORM 1)</scope>
    <source>
        <tissue>Brain</tissue>
    </source>
</reference>
<reference key="3">
    <citation type="journal article" date="2000" name="J. Immunol.">
        <title>IL-1 signaling cascade in liver cells and the involvement of a soluble form of the IL-1 receptor accessory protein.</title>
        <authorList>
            <person name="Jensen L.E."/>
            <person name="Muzio M."/>
            <person name="Mantovani A."/>
            <person name="Whitehead A.S."/>
        </authorList>
    </citation>
    <scope>NUCLEOTIDE SEQUENCE [GENOMIC DNA / MRNA] (ISOFORMS 1 AND 2)</scope>
    <scope>FUNCTION</scope>
    <scope>INDUCTION BY PHORBOL ESTERS</scope>
    <source>
        <tissue>Liver</tissue>
    </source>
</reference>
<reference key="4">
    <citation type="journal article" date="2003" name="Cell. Signal.">
        <title>Expression of alternatively spliced interleukin-1 receptor accessory protein mRNAs is differentially regulated during inflammation and apoptosis.</title>
        <authorList>
            <person name="Jensen L.E."/>
            <person name="Whitehead A.S."/>
        </authorList>
    </citation>
    <scope>NUCLEOTIDE SEQUENCE [MRNA] (ISOFORMS 1; 2 AND 3)</scope>
    <scope>INDUCTION BY PHORBOL ESTERS</scope>
    <source>
        <tissue>Liver</tissue>
    </source>
</reference>
<reference key="5">
    <citation type="journal article" date="2008" name="Mol. Immunol.">
        <title>A novel alternatively spliced interleukin-1 receptor accessory protein mIL-1RAcP687.</title>
        <authorList>
            <person name="Lu H.L."/>
            <person name="Yang C.Y."/>
            <person name="Chen H.C."/>
            <person name="Hung C.S."/>
            <person name="Chiang Y.C."/>
            <person name="Ting L.P."/>
        </authorList>
    </citation>
    <scope>NUCLEOTIDE SEQUENCE [MRNA] (ISOFORM 4)</scope>
</reference>
<reference key="6">
    <citation type="journal article" date="2009" name="Immunity">
        <title>A central nervous system-restricted isoform of the interleukin-1 receptor accessory protein modulates neuronal responses to interleukin-1.</title>
        <authorList>
            <person name="Smith D.E."/>
            <person name="Lipsky B.P."/>
            <person name="Russell C."/>
            <person name="Ketchem R.R."/>
            <person name="Kirchner J."/>
            <person name="Hensley K."/>
            <person name="Huang Y."/>
            <person name="Friedman W.J."/>
            <person name="Boissonneault V."/>
            <person name="Plante M.M."/>
            <person name="Rivest S."/>
            <person name="Sims J.E."/>
        </authorList>
    </citation>
    <scope>NUCLEOTIDE SEQUENCE [MRNA] (ISOFORM 4)</scope>
    <scope>FUNCTION (ISOFORM 4)</scope>
    <scope>TISSUE SPECIFICITY (ISOFORM 4)</scope>
    <scope>INTERACTION WITH IL1R1</scope>
</reference>
<reference key="7">
    <citation type="journal article" date="2006" name="Nature">
        <title>The DNA sequence, annotation and analysis of human chromosome 3.</title>
        <authorList>
            <person name="Muzny D.M."/>
            <person name="Scherer S.E."/>
            <person name="Kaul R."/>
            <person name="Wang J."/>
            <person name="Yu J."/>
            <person name="Sudbrak R."/>
            <person name="Buhay C.J."/>
            <person name="Chen R."/>
            <person name="Cree A."/>
            <person name="Ding Y."/>
            <person name="Dugan-Rocha S."/>
            <person name="Gill R."/>
            <person name="Gunaratne P."/>
            <person name="Harris R.A."/>
            <person name="Hawes A.C."/>
            <person name="Hernandez J."/>
            <person name="Hodgson A.V."/>
            <person name="Hume J."/>
            <person name="Jackson A."/>
            <person name="Khan Z.M."/>
            <person name="Kovar-Smith C."/>
            <person name="Lewis L.R."/>
            <person name="Lozado R.J."/>
            <person name="Metzker M.L."/>
            <person name="Milosavljevic A."/>
            <person name="Miner G.R."/>
            <person name="Morgan M.B."/>
            <person name="Nazareth L.V."/>
            <person name="Scott G."/>
            <person name="Sodergren E."/>
            <person name="Song X.-Z."/>
            <person name="Steffen D."/>
            <person name="Wei S."/>
            <person name="Wheeler D.A."/>
            <person name="Wright M.W."/>
            <person name="Worley K.C."/>
            <person name="Yuan Y."/>
            <person name="Zhang Z."/>
            <person name="Adams C.Q."/>
            <person name="Ansari-Lari M.A."/>
            <person name="Ayele M."/>
            <person name="Brown M.J."/>
            <person name="Chen G."/>
            <person name="Chen Z."/>
            <person name="Clendenning J."/>
            <person name="Clerc-Blankenburg K.P."/>
            <person name="Chen R."/>
            <person name="Chen Z."/>
            <person name="Davis C."/>
            <person name="Delgado O."/>
            <person name="Dinh H.H."/>
            <person name="Dong W."/>
            <person name="Draper H."/>
            <person name="Ernst S."/>
            <person name="Fu G."/>
            <person name="Gonzalez-Garay M.L."/>
            <person name="Garcia D.K."/>
            <person name="Gillett W."/>
            <person name="Gu J."/>
            <person name="Hao B."/>
            <person name="Haugen E."/>
            <person name="Havlak P."/>
            <person name="He X."/>
            <person name="Hennig S."/>
            <person name="Hu S."/>
            <person name="Huang W."/>
            <person name="Jackson L.R."/>
            <person name="Jacob L.S."/>
            <person name="Kelly S.H."/>
            <person name="Kube M."/>
            <person name="Levy R."/>
            <person name="Li Z."/>
            <person name="Liu B."/>
            <person name="Liu J."/>
            <person name="Liu W."/>
            <person name="Lu J."/>
            <person name="Maheshwari M."/>
            <person name="Nguyen B.-V."/>
            <person name="Okwuonu G.O."/>
            <person name="Palmeiri A."/>
            <person name="Pasternak S."/>
            <person name="Perez L.M."/>
            <person name="Phelps K.A."/>
            <person name="Plopper F.J."/>
            <person name="Qiang B."/>
            <person name="Raymond C."/>
            <person name="Rodriguez R."/>
            <person name="Saenphimmachak C."/>
            <person name="Santibanez J."/>
            <person name="Shen H."/>
            <person name="Shen Y."/>
            <person name="Subramanian S."/>
            <person name="Tabor P.E."/>
            <person name="Verduzco D."/>
            <person name="Waldron L."/>
            <person name="Wang J."/>
            <person name="Wang J."/>
            <person name="Wang Q."/>
            <person name="Williams G.A."/>
            <person name="Wong G.K.-S."/>
            <person name="Yao Z."/>
            <person name="Zhang J."/>
            <person name="Zhang X."/>
            <person name="Zhao G."/>
            <person name="Zhou J."/>
            <person name="Zhou Y."/>
            <person name="Nelson D."/>
            <person name="Lehrach H."/>
            <person name="Reinhardt R."/>
            <person name="Naylor S.L."/>
            <person name="Yang H."/>
            <person name="Olson M."/>
            <person name="Weinstock G."/>
            <person name="Gibbs R.A."/>
        </authorList>
    </citation>
    <scope>NUCLEOTIDE SEQUENCE [LARGE SCALE GENOMIC DNA]</scope>
</reference>
<reference key="8">
    <citation type="submission" date="2005-09" db="EMBL/GenBank/DDBJ databases">
        <authorList>
            <person name="Mural R.J."/>
            <person name="Istrail S."/>
            <person name="Sutton G.G."/>
            <person name="Florea L."/>
            <person name="Halpern A.L."/>
            <person name="Mobarry C.M."/>
            <person name="Lippert R."/>
            <person name="Walenz B."/>
            <person name="Shatkay H."/>
            <person name="Dew I."/>
            <person name="Miller J.R."/>
            <person name="Flanigan M.J."/>
            <person name="Edwards N.J."/>
            <person name="Bolanos R."/>
            <person name="Fasulo D."/>
            <person name="Halldorsson B.V."/>
            <person name="Hannenhalli S."/>
            <person name="Turner R."/>
            <person name="Yooseph S."/>
            <person name="Lu F."/>
            <person name="Nusskern D.R."/>
            <person name="Shue B.C."/>
            <person name="Zheng X.H."/>
            <person name="Zhong F."/>
            <person name="Delcher A.L."/>
            <person name="Huson D.H."/>
            <person name="Kravitz S.A."/>
            <person name="Mouchard L."/>
            <person name="Reinert K."/>
            <person name="Remington K.A."/>
            <person name="Clark A.G."/>
            <person name="Waterman M.S."/>
            <person name="Eichler E.E."/>
            <person name="Adams M.D."/>
            <person name="Hunkapiller M.W."/>
            <person name="Myers E.W."/>
            <person name="Venter J.C."/>
        </authorList>
    </citation>
    <scope>NUCLEOTIDE SEQUENCE [LARGE SCALE GENOMIC DNA]</scope>
</reference>
<reference key="9">
    <citation type="journal article" date="2004" name="Genome Res.">
        <title>The status, quality, and expansion of the NIH full-length cDNA project: the Mammalian Gene Collection (MGC).</title>
        <authorList>
            <consortium name="The MGC Project Team"/>
        </authorList>
    </citation>
    <scope>NUCLEOTIDE SEQUENCE [LARGE SCALE MRNA] (ISOFORM 2)</scope>
    <source>
        <tissue>Skin</tissue>
    </source>
</reference>
<reference key="10">
    <citation type="journal article" date="1998" name="Genomics">
        <title>The human gene encoding the interleukin-1 receptor accessory protein (IL1RAP) maps to chromosome 3q28 by fluorescence in situ hybridization and radiation hybrid mapping.</title>
        <authorList>
            <person name="Dale M."/>
            <person name="Hammond D.W."/>
            <person name="Cox A."/>
            <person name="Nicklin M.J.H."/>
        </authorList>
    </citation>
    <scope>NUCLEOTIDE SEQUENCE [GENOMIC DNA] OF 118-179</scope>
</reference>
<reference key="11">
    <citation type="journal article" date="1998" name="J. Immunol.">
        <title>The type II IL-1 receptor interacts with the IL-1 receptor accessory protein: a novel mechanism of regulation of IL-1 responsiveness.</title>
        <authorList>
            <person name="Lang D."/>
            <person name="Knop J."/>
            <person name="Wesche H."/>
            <person name="Raffetseder U."/>
            <person name="Kurrle R."/>
            <person name="Boraschi D."/>
            <person name="Martin M.U."/>
        </authorList>
    </citation>
    <scope>INTERACTION WITH IL1R2</scope>
</reference>
<reference key="12">
    <citation type="journal article" date="2000" name="Int. Immunol.">
        <title>IL-12 synergizes with IL-18 or IL-1beta for IFN-gamma production from human T cells.</title>
        <authorList>
            <person name="Tominaga K."/>
            <person name="Yoshimoto T."/>
            <person name="Torigoe K."/>
            <person name="Kurimoto M."/>
            <person name="Matsui K."/>
            <person name="Hada T."/>
            <person name="Okamura H."/>
            <person name="Nakanishi K."/>
        </authorList>
    </citation>
    <scope>TISSUE SPECIFICITY</scope>
    <scope>FUNCTION</scope>
</reference>
<reference key="13">
    <citation type="journal article" date="2003" name="Biochem. Biophys. Res. Commun.">
        <title>Characterization of a cascade of protein interactions initiated at the IL-1 receptor.</title>
        <authorList>
            <person name="Boch J.A."/>
            <person name="Yoshida Y."/>
            <person name="Koyama Y."/>
            <person name="Wara-Aswapati N."/>
            <person name="Peng H."/>
            <person name="Unlu S."/>
            <person name="Auron P.E."/>
        </authorList>
    </citation>
    <scope>INTERACTION WITH IRAK2</scope>
</reference>
<reference key="14">
    <citation type="journal article" date="2003" name="Immunity">
        <title>The soluble form of IL-1 receptor accessory protein enhances the ability of soluble type II IL-1 receptor to inhibit IL-1 action.</title>
        <authorList>
            <person name="Smith D.E."/>
            <person name="Hanna R."/>
            <person name="Friend D."/>
            <person name="Moore H."/>
            <person name="Chen H."/>
            <person name="Farese A.M."/>
            <person name="MacVittie T.J."/>
            <person name="Virca G.D."/>
            <person name="Sims J.E."/>
        </authorList>
    </citation>
    <scope>FUNCTION (SECRETED FORMS)</scope>
    <scope>TISSUE SPECIFICITY</scope>
</reference>
<reference key="15">
    <citation type="journal article" date="2008" name="Proc. Natl. Acad. Sci. U.S.A.">
        <title>A quantitative atlas of mitotic phosphorylation.</title>
        <authorList>
            <person name="Dephoure N."/>
            <person name="Zhou C."/>
            <person name="Villen J."/>
            <person name="Beausoleil S.A."/>
            <person name="Bakalarski C.E."/>
            <person name="Elledge S.J."/>
            <person name="Gygi S.P."/>
        </authorList>
    </citation>
    <scope>IDENTIFICATION BY MASS SPECTROMETRY [LARGE SCALE ANALYSIS]</scope>
    <source>
        <tissue>Cervix carcinoma</tissue>
    </source>
</reference>
<reference key="16">
    <citation type="journal article" date="2009" name="Mol. Cell. Proteomics">
        <title>Large-scale proteomics analysis of the human kinome.</title>
        <authorList>
            <person name="Oppermann F.S."/>
            <person name="Gnad F."/>
            <person name="Olsen J.V."/>
            <person name="Hornberger R."/>
            <person name="Greff Z."/>
            <person name="Keri G."/>
            <person name="Mann M."/>
            <person name="Daub H."/>
        </authorList>
    </citation>
    <scope>IDENTIFICATION BY MASS SPECTROMETRY [LARGE SCALE ANALYSIS]</scope>
</reference>
<reference key="17">
    <citation type="journal article" date="2009" name="Sci. Signal.">
        <title>Quantitative phosphoproteomic analysis of T cell receptor signaling reveals system-wide modulation of protein-protein interactions.</title>
        <authorList>
            <person name="Mayya V."/>
            <person name="Lundgren D.H."/>
            <person name="Hwang S.-I."/>
            <person name="Rezaul K."/>
            <person name="Wu L."/>
            <person name="Eng J.K."/>
            <person name="Rodionov V."/>
            <person name="Han D.K."/>
        </authorList>
    </citation>
    <scope>PHOSPHORYLATION [LARGE SCALE ANALYSIS] AT SER-557</scope>
    <scope>IDENTIFICATION BY MASS SPECTROMETRY [LARGE SCALE ANALYSIS]</scope>
    <source>
        <tissue>Leukemic T-cell</tissue>
    </source>
</reference>
<reference key="18">
    <citation type="journal article" date="2009" name="Structure">
        <title>Structure of IL-33 and its interaction with the ST2 and IL-1RAcP receptors--insight into heterotrimeric IL-1 signaling complexes.</title>
        <authorList>
            <person name="Lingel A."/>
            <person name="Weiss T.M."/>
            <person name="Niebuhr M."/>
            <person name="Pan B."/>
            <person name="Appleton B.A."/>
            <person name="Wiesmann C."/>
            <person name="Bazan J.F."/>
            <person name="Fairbrother W.J."/>
        </authorList>
    </citation>
    <scope>FUNCTION</scope>
    <scope>MODEL OF THE IL-33 SIGNALING COMPLEX</scope>
</reference>
<reference key="19">
    <citation type="journal article" date="2010" name="Proc. Natl. Acad. Sci. U.S.A.">
        <title>Isolation and killing of candidate chronic myeloid leukemia stem cells by antibody targeting of IL-1 receptor accessory protein.</title>
        <authorList>
            <person name="Jaeraas M."/>
            <person name="Johnels P."/>
            <person name="Hansen N."/>
            <person name="Agerstam H."/>
            <person name="Tsapogas P."/>
            <person name="Rissler M."/>
            <person name="Lassen C."/>
            <person name="Olofsson T."/>
            <person name="Bjerrum O.W."/>
            <person name="Richter J."/>
            <person name="Fioretos T."/>
        </authorList>
    </citation>
    <scope>TISSUE SPECIFICITY</scope>
</reference>
<reference key="20">
    <citation type="journal article" date="2010" name="Sci. Signal.">
        <title>Quantitative phosphoproteomics reveals widespread full phosphorylation site occupancy during mitosis.</title>
        <authorList>
            <person name="Olsen J.V."/>
            <person name="Vermeulen M."/>
            <person name="Santamaria A."/>
            <person name="Kumar C."/>
            <person name="Miller M.L."/>
            <person name="Jensen L.J."/>
            <person name="Gnad F."/>
            <person name="Cox J."/>
            <person name="Jensen T.S."/>
            <person name="Nigg E.A."/>
            <person name="Brunak S."/>
            <person name="Mann M."/>
        </authorList>
    </citation>
    <scope>IDENTIFICATION BY MASS SPECTROMETRY [LARGE SCALE ANALYSIS]</scope>
    <source>
        <tissue>Cervix carcinoma</tissue>
    </source>
</reference>
<reference key="21">
    <citation type="journal article" date="2012" name="Blood">
        <title>Overexpression of IL-1 receptor accessory protein in stem and progenitor cells and outcome correlation in AML and MDS.</title>
        <authorList>
            <person name="Barreyro L."/>
            <person name="Will B."/>
            <person name="Bartholdy B."/>
            <person name="Zhou L."/>
            <person name="Todorova T.I."/>
            <person name="Stanley R.F."/>
            <person name="Ben-Neriah S."/>
            <person name="Montagna C."/>
            <person name="Parekh S."/>
            <person name="Pellagatti A."/>
            <person name="Boultwood J."/>
            <person name="Paietta E."/>
            <person name="Ketterling R.P."/>
            <person name="Cripe L."/>
            <person name="Fernandez H.F."/>
            <person name="Greenberg P.L."/>
            <person name="Tallman M.S."/>
            <person name="Steidl C."/>
            <person name="Mitsiades C.S."/>
            <person name="Verma A."/>
            <person name="Steidl U."/>
        </authorList>
    </citation>
    <scope>TISSUE SPECIFICITY</scope>
</reference>
<reference key="22">
    <citation type="journal article" date="2013" name="Blood">
        <title>Selective killing of candidate AML stem cells by antibody targeting of IL1RAP.</title>
        <authorList>
            <person name="Askmyr M."/>
            <person name="Aagerstam H."/>
            <person name="Hansen N."/>
            <person name="Gordon S."/>
            <person name="Arvanitakis A."/>
            <person name="Rissler M."/>
            <person name="Juliusson G."/>
            <person name="Richter J."/>
            <person name="Jaeraas M."/>
            <person name="Fioretos T."/>
        </authorList>
    </citation>
    <scope>TISSUE SPECIFICITY</scope>
</reference>
<reference key="23">
    <citation type="journal article" date="2013" name="J. Proteome Res.">
        <title>Toward a comprehensive characterization of a human cancer cell phosphoproteome.</title>
        <authorList>
            <person name="Zhou H."/>
            <person name="Di Palma S."/>
            <person name="Preisinger C."/>
            <person name="Peng M."/>
            <person name="Polat A.N."/>
            <person name="Heck A.J."/>
            <person name="Mohammed S."/>
        </authorList>
    </citation>
    <scope>PHOSPHORYLATION [LARGE SCALE ANALYSIS] AT SER-557</scope>
    <scope>IDENTIFICATION BY MASS SPECTROMETRY [LARGE SCALE ANALYSIS]</scope>
    <source>
        <tissue>Cervix carcinoma</tissue>
        <tissue>Erythroleukemia</tissue>
    </source>
</reference>
<reference key="24">
    <citation type="journal article" date="2015" name="Am. J. Physiol.">
        <title>Increased IL-33 expression in chronic obstructive pulmonary disease.</title>
        <authorList>
            <person name="Xia J."/>
            <person name="Zhao J."/>
            <person name="Shang J."/>
            <person name="Li M."/>
            <person name="Zeng Z."/>
            <person name="Zhao J."/>
            <person name="Wang J."/>
            <person name="Xu Y."/>
            <person name="Xie J."/>
        </authorList>
    </citation>
    <scope>TISSUE SPECIFICITY</scope>
</reference>
<reference key="25">
    <citation type="journal article" date="2010" name="Nat. Immunol.">
        <title>Structural insights into the assembly and activation of IL-1beta with its receptors.</title>
        <authorList>
            <person name="Wang D."/>
            <person name="Zhang S."/>
            <person name="Li L."/>
            <person name="Liu X."/>
            <person name="Mei K."/>
            <person name="Wang X."/>
        </authorList>
    </citation>
    <scope>X-RAY CRYSTALLOGRAPHY (3.3 ANGSTROMS) OF 21-350 IN COMPLEX WITH IL1R2 AND IL1B</scope>
    <scope>SUBUNIT</scope>
    <scope>DISULFIDE BONDS</scope>
    <scope>GLYCOSYLATION AT ASN-107; ASN-111; ASN-118 AND ASN-209</scope>
</reference>
<protein>
    <recommendedName>
        <fullName>Interleukin-1 receptor accessory protein</fullName>
        <shortName>IL-1 receptor accessory protein</shortName>
        <shortName>IL-1RAcP</shortName>
        <ecNumber evidence="4">3.2.2.6</ecNumber>
    </recommendedName>
    <alternativeName>
        <fullName>Interleukin-1 receptor 3</fullName>
        <shortName>IL-1R-3</shortName>
        <shortName>IL-1R3</shortName>
    </alternativeName>
</protein>